<keyword id="KW-0249">Electron transport</keyword>
<keyword id="KW-0496">Mitochondrion</keyword>
<keyword id="KW-0520">NAD</keyword>
<keyword id="KW-0560">Oxidoreductase</keyword>
<keyword id="KW-0679">Respiratory chain</keyword>
<keyword id="KW-1278">Translocase</keyword>
<keyword id="KW-0813">Transport</keyword>
<keyword id="KW-0830">Ubiquinone</keyword>
<reference key="1">
    <citation type="journal article" date="1990" name="Cell">
        <title>The MURF3 gene of T. brucei contains multiple domains of extensive editing and is homologous to a subunit of NADH dehydrogenase.</title>
        <authorList>
            <person name="Koslowsky D.J."/>
            <person name="Bhat G."/>
            <person name="Jayarama Perrollaz A.L."/>
            <person name="Feagin J.E."/>
            <person name="Stuart K."/>
        </authorList>
    </citation>
    <scope>NUCLEOTIDE SEQUENCE [MRNA]</scope>
</reference>
<accession>P21301</accession>
<proteinExistence type="evidence at transcript level"/>
<sequence>MLFLVVFLHLYRFTFGPQHPAAHGVLCCLLYFCGEFIVYIDCIIGYLHRGTEKLCEYKSVEQCLPYFDRLDYVSVCCNEHLLSLCFEYMLRCCLSLRCAFMRLLIVEFTRSFNGLLCISCMVLDLGCLSPLLWSFEERDKLMTFFDLCCGCRMHLAFMVLLGILDDFVFGFVDFLLLLIISCLFVMDCYDLLFVGNRLFYLRLRGLSFFDLYDLVFNSLSGVLSRSLGMVWDCRLFSCYELYFMFCYDYCFCFIGDAFDRLFLRLFDMRMSLLICKQCFFVGFFVFGFVCLFDYLYCDITIETIIMLFYSLWCCCLPGISFACVEHPKGEYCLLLCFCVGLCSRLRLRCADFLHICLLDVCLRGFLLHDLVAVLGNIDVVFGSVDR</sequence>
<name>NDUS2_TRYBB</name>
<dbReference type="EC" id="7.1.1.2"/>
<dbReference type="EMBL" id="M55645">
    <property type="status" value="NOT_ANNOTATED_CDS"/>
    <property type="molecule type" value="mRNA"/>
</dbReference>
<dbReference type="PIR" id="A35693">
    <property type="entry name" value="A35693"/>
</dbReference>
<dbReference type="SMR" id="P21301"/>
<dbReference type="GO" id="GO:0005739">
    <property type="term" value="C:mitochondrion"/>
    <property type="evidence" value="ECO:0007669"/>
    <property type="project" value="UniProtKB-SubCell"/>
</dbReference>
<dbReference type="GO" id="GO:0051287">
    <property type="term" value="F:NAD binding"/>
    <property type="evidence" value="ECO:0007669"/>
    <property type="project" value="InterPro"/>
</dbReference>
<dbReference type="GO" id="GO:0008137">
    <property type="term" value="F:NADH dehydrogenase (ubiquinone) activity"/>
    <property type="evidence" value="ECO:0007669"/>
    <property type="project" value="UniProtKB-EC"/>
</dbReference>
<dbReference type="GO" id="GO:0048038">
    <property type="term" value="F:quinone binding"/>
    <property type="evidence" value="ECO:0007669"/>
    <property type="project" value="InterPro"/>
</dbReference>
<dbReference type="GO" id="GO:0006120">
    <property type="term" value="P:mitochondrial electron transport, NADH to ubiquinone"/>
    <property type="evidence" value="ECO:0007669"/>
    <property type="project" value="TreeGrafter"/>
</dbReference>
<dbReference type="Gene3D" id="1.10.645.10">
    <property type="entry name" value="Cytochrome-c3 Hydrogenase, chain B"/>
    <property type="match status" value="1"/>
</dbReference>
<dbReference type="InterPro" id="IPR001135">
    <property type="entry name" value="NADH_Q_OxRdtase_suD"/>
</dbReference>
<dbReference type="InterPro" id="IPR014029">
    <property type="entry name" value="NADH_UbQ_OxRdtase_49kDa_CS"/>
</dbReference>
<dbReference type="InterPro" id="IPR022885">
    <property type="entry name" value="NDH1_su_D/H"/>
</dbReference>
<dbReference type="InterPro" id="IPR029014">
    <property type="entry name" value="NiFe-Hase_large"/>
</dbReference>
<dbReference type="PANTHER" id="PTHR11993:SF10">
    <property type="entry name" value="NADH DEHYDROGENASE [UBIQUINONE] IRON-SULFUR PROTEIN 2, MITOCHONDRIAL"/>
    <property type="match status" value="1"/>
</dbReference>
<dbReference type="PANTHER" id="PTHR11993">
    <property type="entry name" value="NADH-UBIQUINONE OXIDOREDUCTASE 49 KDA SUBUNIT"/>
    <property type="match status" value="1"/>
</dbReference>
<dbReference type="Pfam" id="PF00346">
    <property type="entry name" value="Complex1_49kDa"/>
    <property type="match status" value="2"/>
</dbReference>
<dbReference type="SUPFAM" id="SSF56762">
    <property type="entry name" value="HydB/Nqo4-like"/>
    <property type="match status" value="1"/>
</dbReference>
<dbReference type="PROSITE" id="PS00535">
    <property type="entry name" value="COMPLEX1_49K"/>
    <property type="match status" value="1"/>
</dbReference>
<feature type="chain" id="PRO_0000118594" description="NADH-ubiquinone oxidoreductase 49 kDa subunit homolog">
    <location>
        <begin position="1"/>
        <end position="386"/>
    </location>
</feature>
<protein>
    <recommendedName>
        <fullName>NADH-ubiquinone oxidoreductase 49 kDa subunit homolog</fullName>
        <ecNumber>7.1.1.2</ecNumber>
    </recommendedName>
    <alternativeName>
        <fullName>NADH dehydrogenase subunit 7 homolog</fullName>
    </alternativeName>
</protein>
<organism>
    <name type="scientific">Trypanosoma brucei brucei</name>
    <dbReference type="NCBI Taxonomy" id="5702"/>
    <lineage>
        <taxon>Eukaryota</taxon>
        <taxon>Discoba</taxon>
        <taxon>Euglenozoa</taxon>
        <taxon>Kinetoplastea</taxon>
        <taxon>Metakinetoplastina</taxon>
        <taxon>Trypanosomatida</taxon>
        <taxon>Trypanosomatidae</taxon>
        <taxon>Trypanosoma</taxon>
    </lineage>
</organism>
<comment type="function">
    <text evidence="1">Core subunit of the mitochondrial membrane respiratory chain NADH dehydrogenase (Complex I) that is believed to belong to the minimal assembly required for catalysis. Complex I functions in the transfer of electrons from NADH to the respiratory chain. The immediate electron acceptor for the enzyme is believed to be ubiquinone (By similarity). Component of the iron-sulfur (IP) fragment of the enzyme. Component of the iron-sulfur (IP) fragment of the enzyme.</text>
</comment>
<comment type="catalytic activity">
    <reaction>
        <text>a ubiquinone + NADH + 5 H(+)(in) = a ubiquinol + NAD(+) + 4 H(+)(out)</text>
        <dbReference type="Rhea" id="RHEA:29091"/>
        <dbReference type="Rhea" id="RHEA-COMP:9565"/>
        <dbReference type="Rhea" id="RHEA-COMP:9566"/>
        <dbReference type="ChEBI" id="CHEBI:15378"/>
        <dbReference type="ChEBI" id="CHEBI:16389"/>
        <dbReference type="ChEBI" id="CHEBI:17976"/>
        <dbReference type="ChEBI" id="CHEBI:57540"/>
        <dbReference type="ChEBI" id="CHEBI:57945"/>
        <dbReference type="EC" id="7.1.1.2"/>
    </reaction>
</comment>
<comment type="subcellular location">
    <subcellularLocation>
        <location>Mitochondrion</location>
    </subcellularLocation>
</comment>
<comment type="similarity">
    <text evidence="2">Belongs to the complex I 49 kDa subunit family.</text>
</comment>
<geneLocation type="mitochondrion"/>
<evidence type="ECO:0000250" key="1"/>
<evidence type="ECO:0000305" key="2"/>
<gene>
    <name type="primary">NAD7</name>
    <name type="synonym">MURF 3</name>
</gene>